<reference key="1">
    <citation type="journal article" date="2006" name="PLoS Genet.">
        <title>The complete genome sequence and comparative genome analysis of the high pathogenicity Yersinia enterocolitica strain 8081.</title>
        <authorList>
            <person name="Thomson N.R."/>
            <person name="Howard S."/>
            <person name="Wren B.W."/>
            <person name="Holden M.T.G."/>
            <person name="Crossman L."/>
            <person name="Challis G.L."/>
            <person name="Churcher C."/>
            <person name="Mungall K."/>
            <person name="Brooks K."/>
            <person name="Chillingworth T."/>
            <person name="Feltwell T."/>
            <person name="Abdellah Z."/>
            <person name="Hauser H."/>
            <person name="Jagels K."/>
            <person name="Maddison M."/>
            <person name="Moule S."/>
            <person name="Sanders M."/>
            <person name="Whitehead S."/>
            <person name="Quail M.A."/>
            <person name="Dougan G."/>
            <person name="Parkhill J."/>
            <person name="Prentice M.B."/>
        </authorList>
    </citation>
    <scope>NUCLEOTIDE SEQUENCE [LARGE SCALE GENOMIC DNA]</scope>
    <source>
        <strain>NCTC 13174 / 8081</strain>
    </source>
</reference>
<protein>
    <recommendedName>
        <fullName evidence="1">HMP-PP phosphatase</fullName>
        <ecNumber evidence="1">3.6.1.-</ecNumber>
    </recommendedName>
</protein>
<dbReference type="EC" id="3.6.1.-" evidence="1"/>
<dbReference type="EMBL" id="AM286415">
    <property type="protein sequence ID" value="CAL13160.1"/>
    <property type="molecule type" value="Genomic_DNA"/>
</dbReference>
<dbReference type="RefSeq" id="WP_011816893.1">
    <property type="nucleotide sequence ID" value="NC_008800.1"/>
</dbReference>
<dbReference type="RefSeq" id="YP_001007307.1">
    <property type="nucleotide sequence ID" value="NC_008800.1"/>
</dbReference>
<dbReference type="SMR" id="A1JNL2"/>
<dbReference type="KEGG" id="yen:YE3125"/>
<dbReference type="PATRIC" id="fig|393305.7.peg.3327"/>
<dbReference type="eggNOG" id="COG0561">
    <property type="taxonomic scope" value="Bacteria"/>
</dbReference>
<dbReference type="HOGENOM" id="CLU_044146_5_2_6"/>
<dbReference type="OrthoDB" id="5498330at2"/>
<dbReference type="Proteomes" id="UP000000642">
    <property type="component" value="Chromosome"/>
</dbReference>
<dbReference type="GO" id="GO:0002145">
    <property type="term" value="F:4-amino-5-hydroxymethyl-2-methylpyrimidine diphosphatase activity"/>
    <property type="evidence" value="ECO:0007669"/>
    <property type="project" value="RHEA"/>
</dbReference>
<dbReference type="GO" id="GO:0000287">
    <property type="term" value="F:magnesium ion binding"/>
    <property type="evidence" value="ECO:0000250"/>
    <property type="project" value="UniProtKB"/>
</dbReference>
<dbReference type="GO" id="GO:0016791">
    <property type="term" value="F:phosphatase activity"/>
    <property type="evidence" value="ECO:0000250"/>
    <property type="project" value="UniProtKB"/>
</dbReference>
<dbReference type="CDD" id="cd07516">
    <property type="entry name" value="HAD_Pase"/>
    <property type="match status" value="1"/>
</dbReference>
<dbReference type="Gene3D" id="3.30.1240.10">
    <property type="match status" value="1"/>
</dbReference>
<dbReference type="Gene3D" id="3.40.50.1000">
    <property type="entry name" value="HAD superfamily/HAD-like"/>
    <property type="match status" value="1"/>
</dbReference>
<dbReference type="HAMAP" id="MF_01847">
    <property type="entry name" value="HMP_PP_phosphat"/>
    <property type="match status" value="1"/>
</dbReference>
<dbReference type="InterPro" id="IPR000150">
    <property type="entry name" value="Cof"/>
</dbReference>
<dbReference type="InterPro" id="IPR036412">
    <property type="entry name" value="HAD-like_sf"/>
</dbReference>
<dbReference type="InterPro" id="IPR006379">
    <property type="entry name" value="HAD-SF_hydro_IIB"/>
</dbReference>
<dbReference type="InterPro" id="IPR023214">
    <property type="entry name" value="HAD_sf"/>
</dbReference>
<dbReference type="InterPro" id="IPR023938">
    <property type="entry name" value="HMP-PP_phosphatase"/>
</dbReference>
<dbReference type="NCBIfam" id="TIGR00099">
    <property type="entry name" value="Cof-subfamily"/>
    <property type="match status" value="1"/>
</dbReference>
<dbReference type="NCBIfam" id="TIGR01484">
    <property type="entry name" value="HAD-SF-IIB"/>
    <property type="match status" value="1"/>
</dbReference>
<dbReference type="NCBIfam" id="NF011705">
    <property type="entry name" value="PRK15126.1"/>
    <property type="match status" value="1"/>
</dbReference>
<dbReference type="PANTHER" id="PTHR47267">
    <property type="match status" value="1"/>
</dbReference>
<dbReference type="PANTHER" id="PTHR47267:SF2">
    <property type="entry name" value="HMP-PP PHOSPHATASE"/>
    <property type="match status" value="1"/>
</dbReference>
<dbReference type="Pfam" id="PF08282">
    <property type="entry name" value="Hydrolase_3"/>
    <property type="match status" value="1"/>
</dbReference>
<dbReference type="SFLD" id="SFLDG01140">
    <property type="entry name" value="C2.B:_Phosphomannomutase_and_P"/>
    <property type="match status" value="1"/>
</dbReference>
<dbReference type="SFLD" id="SFLDS00003">
    <property type="entry name" value="Haloacid_Dehalogenase"/>
    <property type="match status" value="1"/>
</dbReference>
<dbReference type="SUPFAM" id="SSF56784">
    <property type="entry name" value="HAD-like"/>
    <property type="match status" value="1"/>
</dbReference>
<dbReference type="PROSITE" id="PS01228">
    <property type="entry name" value="COF_1"/>
    <property type="match status" value="1"/>
</dbReference>
<dbReference type="PROSITE" id="PS01229">
    <property type="entry name" value="COF_2"/>
    <property type="match status" value="1"/>
</dbReference>
<comment type="function">
    <text evidence="1">Catalyzes the hydrolysis of 4-amino-2-methyl-5-hydroxymethylpyrimidine pyrophosphate (HMP-PP) to 4-amino-2-methyl-5-hydroxymethylpyrimidine phosphate (HMP-P).</text>
</comment>
<comment type="catalytic activity">
    <reaction evidence="1">
        <text>4-amino-2-methyl-5-(diphosphooxymethyl)pyrimidine + H2O = 4-amino-2-methyl-5-(phosphooxymethyl)pyrimidine + phosphate + H(+)</text>
        <dbReference type="Rhea" id="RHEA:27914"/>
        <dbReference type="ChEBI" id="CHEBI:15377"/>
        <dbReference type="ChEBI" id="CHEBI:15378"/>
        <dbReference type="ChEBI" id="CHEBI:43474"/>
        <dbReference type="ChEBI" id="CHEBI:57841"/>
        <dbReference type="ChEBI" id="CHEBI:58354"/>
    </reaction>
</comment>
<comment type="cofactor">
    <cofactor evidence="1">
        <name>Mg(2+)</name>
        <dbReference type="ChEBI" id="CHEBI:18420"/>
    </cofactor>
</comment>
<comment type="similarity">
    <text evidence="1">Belongs to the HAD-like hydrolase superfamily. Cof family.</text>
</comment>
<accession>A1JNL2</accession>
<gene>
    <name evidence="1" type="primary">cof</name>
    <name type="ordered locus">YE3125</name>
</gene>
<organism>
    <name type="scientific">Yersinia enterocolitica serotype O:8 / biotype 1B (strain NCTC 13174 / 8081)</name>
    <dbReference type="NCBI Taxonomy" id="393305"/>
    <lineage>
        <taxon>Bacteria</taxon>
        <taxon>Pseudomonadati</taxon>
        <taxon>Pseudomonadota</taxon>
        <taxon>Gammaproteobacteria</taxon>
        <taxon>Enterobacterales</taxon>
        <taxon>Yersiniaceae</taxon>
        <taxon>Yersinia</taxon>
    </lineage>
</organism>
<evidence type="ECO:0000255" key="1">
    <source>
        <dbReference type="HAMAP-Rule" id="MF_01847"/>
    </source>
</evidence>
<feature type="chain" id="PRO_0000343000" description="HMP-PP phosphatase">
    <location>
        <begin position="1"/>
        <end position="273"/>
    </location>
</feature>
<feature type="active site" description="Nucleophile" evidence="1">
    <location>
        <position position="8"/>
    </location>
</feature>
<feature type="binding site" evidence="1">
    <location>
        <position position="8"/>
    </location>
    <ligand>
        <name>Mg(2+)</name>
        <dbReference type="ChEBI" id="CHEBI:18420"/>
    </ligand>
</feature>
<feature type="binding site" evidence="1">
    <location>
        <position position="10"/>
    </location>
    <ligand>
        <name>Mg(2+)</name>
        <dbReference type="ChEBI" id="CHEBI:18420"/>
    </ligand>
</feature>
<feature type="binding site" evidence="1">
    <location>
        <position position="212"/>
    </location>
    <ligand>
        <name>Mg(2+)</name>
        <dbReference type="ChEBI" id="CHEBI:18420"/>
    </ligand>
</feature>
<sequence>MYRLAAFDMDGTLLMRDHRIGGATLNALHQLVDNGMILTFATGRHYLDMKGILSHSGINGYLITGNGTRVCDMDGMHLDGMDLPAELVEFVLRTPWQTNASIHIFRDDGWFTDYNDPALLAAHKTSSFQFQLTALDALPKTGNHKICFIAPHQELAELKIQLEQHMGDQADFCFSAVDCLEMLPRGCNKGAALERLSHHLDLTLADCMAFGDAMNDKEMLSRVGRGLVMGNALPQLKQELPQLQVIGRCEEQGVAHYLQHWLSSPHLTYSPEF</sequence>
<keyword id="KW-0378">Hydrolase</keyword>
<keyword id="KW-0460">Magnesium</keyword>
<keyword id="KW-0479">Metal-binding</keyword>
<proteinExistence type="inferred from homology"/>
<name>COF_YERE8</name>